<dbReference type="EC" id="4.1.1.19" evidence="1"/>
<dbReference type="EMBL" id="CP000742">
    <property type="protein sequence ID" value="ABR54799.1"/>
    <property type="molecule type" value="Genomic_DNA"/>
</dbReference>
<dbReference type="RefSeq" id="WP_011972700.1">
    <property type="nucleotide sequence ID" value="NC_009634.1"/>
</dbReference>
<dbReference type="SMR" id="A6UQM7"/>
<dbReference type="STRING" id="406327.Mevan_0894"/>
<dbReference type="GeneID" id="5326155"/>
<dbReference type="KEGG" id="mvn:Mevan_0894"/>
<dbReference type="eggNOG" id="arCOG04490">
    <property type="taxonomic scope" value="Archaea"/>
</dbReference>
<dbReference type="HOGENOM" id="CLU_114389_2_0_2"/>
<dbReference type="OrthoDB" id="30748at2157"/>
<dbReference type="Proteomes" id="UP000001107">
    <property type="component" value="Chromosome"/>
</dbReference>
<dbReference type="GO" id="GO:0008792">
    <property type="term" value="F:arginine decarboxylase activity"/>
    <property type="evidence" value="ECO:0007669"/>
    <property type="project" value="UniProtKB-UniRule"/>
</dbReference>
<dbReference type="GO" id="GO:0006527">
    <property type="term" value="P:arginine catabolic process"/>
    <property type="evidence" value="ECO:0007669"/>
    <property type="project" value="InterPro"/>
</dbReference>
<dbReference type="Gene3D" id="3.30.60.30">
    <property type="match status" value="1"/>
</dbReference>
<dbReference type="Gene3D" id="3.50.20.10">
    <property type="entry name" value="Pyruvoyl-Dependent Histidine Decarboxylase, subunit B"/>
    <property type="match status" value="1"/>
</dbReference>
<dbReference type="HAMAP" id="MF_01404">
    <property type="entry name" value="PvlArgDC"/>
    <property type="match status" value="1"/>
</dbReference>
<dbReference type="InterPro" id="IPR016104">
    <property type="entry name" value="Pyr-dep_his/arg-deCO2ase"/>
</dbReference>
<dbReference type="InterPro" id="IPR016105">
    <property type="entry name" value="Pyr-dep_his/arg-deCO2ase_sand"/>
</dbReference>
<dbReference type="InterPro" id="IPR002724">
    <property type="entry name" value="Pyruvoyl-dep_arg_deCO2ase"/>
</dbReference>
<dbReference type="NCBIfam" id="TIGR00286">
    <property type="entry name" value="pyruvoyl-dependent arginine decarboxylase"/>
    <property type="match status" value="1"/>
</dbReference>
<dbReference type="PANTHER" id="PTHR40438">
    <property type="entry name" value="PYRUVOYL-DEPENDENT ARGININE DECARBOXYLASE"/>
    <property type="match status" value="1"/>
</dbReference>
<dbReference type="PANTHER" id="PTHR40438:SF1">
    <property type="entry name" value="PYRUVOYL-DEPENDENT ARGININE DECARBOXYLASE"/>
    <property type="match status" value="1"/>
</dbReference>
<dbReference type="Pfam" id="PF01862">
    <property type="entry name" value="PvlArgDC"/>
    <property type="match status" value="1"/>
</dbReference>
<dbReference type="PIRSF" id="PIRSF005216">
    <property type="entry name" value="Pyruvoyl-dep_arg_deCO2ase"/>
    <property type="match status" value="1"/>
</dbReference>
<dbReference type="SFLD" id="SFLDF00471">
    <property type="entry name" value="Pyruvoyl-dependent_arginine_de"/>
    <property type="match status" value="1"/>
</dbReference>
<dbReference type="SFLD" id="SFLDG01170">
    <property type="entry name" value="Pyruvoyl-dependent_arginine_de"/>
    <property type="match status" value="1"/>
</dbReference>
<dbReference type="SFLD" id="SFLDS00055">
    <property type="entry name" value="Pyruvoyl-Dependent_Histidine/A"/>
    <property type="match status" value="1"/>
</dbReference>
<dbReference type="SUPFAM" id="SSF56271">
    <property type="entry name" value="Pyruvoyl-dependent histidine and arginine decarboxylases"/>
    <property type="match status" value="1"/>
</dbReference>
<sequence>MMKTSAIHFPFQAPNTISLVAGTGDAKNPLNAFDMALLSSGIGNLNLIRISSIMPPKAEIIPLPKIPQGSLVPTAYGYEISKIKGETVAAGISVAIPKDKELCGLIMEYECVGSKKECEDTVREMAKDGFEMRGWEIDEIISIASEQTVENIGCAFAAAALWYK</sequence>
<reference key="1">
    <citation type="submission" date="2007-06" db="EMBL/GenBank/DDBJ databases">
        <title>Complete sequence of Methanococcus vannielii SB.</title>
        <authorList>
            <consortium name="US DOE Joint Genome Institute"/>
            <person name="Copeland A."/>
            <person name="Lucas S."/>
            <person name="Lapidus A."/>
            <person name="Barry K."/>
            <person name="Glavina del Rio T."/>
            <person name="Dalin E."/>
            <person name="Tice H."/>
            <person name="Pitluck S."/>
            <person name="Chain P."/>
            <person name="Malfatti S."/>
            <person name="Shin M."/>
            <person name="Vergez L."/>
            <person name="Schmutz J."/>
            <person name="Larimer F."/>
            <person name="Land M."/>
            <person name="Hauser L."/>
            <person name="Kyrpides N."/>
            <person name="Anderson I."/>
            <person name="Sieprawska-Lupa M."/>
            <person name="Whitman W.B."/>
            <person name="Richardson P."/>
        </authorList>
    </citation>
    <scope>NUCLEOTIDE SEQUENCE [LARGE SCALE GENOMIC DNA]</scope>
    <source>
        <strain>ATCC 35089 / DSM 1224 / JCM 13029 / OCM 148 / SB</strain>
    </source>
</reference>
<organism>
    <name type="scientific">Methanococcus vannielii (strain ATCC 35089 / DSM 1224 / JCM 13029 / OCM 148 / SB)</name>
    <dbReference type="NCBI Taxonomy" id="406327"/>
    <lineage>
        <taxon>Archaea</taxon>
        <taxon>Methanobacteriati</taxon>
        <taxon>Methanobacteriota</taxon>
        <taxon>Methanomada group</taxon>
        <taxon>Methanococci</taxon>
        <taxon>Methanococcales</taxon>
        <taxon>Methanococcaceae</taxon>
        <taxon>Methanococcus</taxon>
    </lineage>
</organism>
<protein>
    <recommendedName>
        <fullName evidence="1">Pyruvoyl-dependent arginine decarboxylase</fullName>
        <shortName evidence="1">PvlArgDC</shortName>
        <ecNumber evidence="1">4.1.1.19</ecNumber>
    </recommendedName>
    <component>
        <recommendedName>
            <fullName evidence="1">Pyruvoyl-dependent arginine decarboxylase subunit beta</fullName>
        </recommendedName>
    </component>
    <component>
        <recommendedName>
            <fullName evidence="1">Pyruvoyl-dependent arginine decarboxylase subunit alpha</fullName>
        </recommendedName>
    </component>
</protein>
<accession>A6UQM7</accession>
<keyword id="KW-0210">Decarboxylase</keyword>
<keyword id="KW-0456">Lyase</keyword>
<keyword id="KW-0670">Pyruvate</keyword>
<proteinExistence type="inferred from homology"/>
<gene>
    <name evidence="1" type="primary">pdaD</name>
    <name type="ordered locus">Mevan_0894</name>
</gene>
<evidence type="ECO:0000255" key="1">
    <source>
        <dbReference type="HAMAP-Rule" id="MF_01404"/>
    </source>
</evidence>
<comment type="catalytic activity">
    <reaction evidence="1">
        <text>L-arginine + H(+) = agmatine + CO2</text>
        <dbReference type="Rhea" id="RHEA:17641"/>
        <dbReference type="ChEBI" id="CHEBI:15378"/>
        <dbReference type="ChEBI" id="CHEBI:16526"/>
        <dbReference type="ChEBI" id="CHEBI:32682"/>
        <dbReference type="ChEBI" id="CHEBI:58145"/>
        <dbReference type="EC" id="4.1.1.19"/>
    </reaction>
</comment>
<comment type="cofactor">
    <cofactor evidence="1">
        <name>pyruvate</name>
        <dbReference type="ChEBI" id="CHEBI:15361"/>
    </cofactor>
    <text evidence="1">Binds 1 pyruvoyl group covalently per subunit.</text>
</comment>
<comment type="similarity">
    <text evidence="1">Belongs to the PdaD family.</text>
</comment>
<name>PDAD_METVS</name>
<feature type="chain" id="PRO_1000068399" description="Pyruvoyl-dependent arginine decarboxylase subunit beta" evidence="1">
    <location>
        <begin position="1"/>
        <end position="51"/>
    </location>
</feature>
<feature type="chain" id="PRO_1000068400" description="Pyruvoyl-dependent arginine decarboxylase subunit alpha" evidence="1">
    <location>
        <begin position="52"/>
        <end position="164"/>
    </location>
</feature>
<feature type="site" description="Cleavage (non-hydrolytic)" evidence="1">
    <location>
        <begin position="51"/>
        <end position="52"/>
    </location>
</feature>
<feature type="modified residue" description="Pyruvic acid (Ser)" evidence="1">
    <location>
        <position position="52"/>
    </location>
</feature>